<dbReference type="EMBL" id="AF022060">
    <property type="protein sequence ID" value="AAD13494.1"/>
    <property type="molecule type" value="Genomic_DNA"/>
</dbReference>
<dbReference type="SMR" id="Q34717"/>
<dbReference type="GO" id="GO:0005743">
    <property type="term" value="C:mitochondrial inner membrane"/>
    <property type="evidence" value="ECO:0007669"/>
    <property type="project" value="UniProtKB-SubCell"/>
</dbReference>
<dbReference type="GO" id="GO:0045275">
    <property type="term" value="C:respiratory chain complex III"/>
    <property type="evidence" value="ECO:0007669"/>
    <property type="project" value="InterPro"/>
</dbReference>
<dbReference type="GO" id="GO:0046872">
    <property type="term" value="F:metal ion binding"/>
    <property type="evidence" value="ECO:0007669"/>
    <property type="project" value="UniProtKB-KW"/>
</dbReference>
<dbReference type="GO" id="GO:0008121">
    <property type="term" value="F:ubiquinol-cytochrome-c reductase activity"/>
    <property type="evidence" value="ECO:0007669"/>
    <property type="project" value="InterPro"/>
</dbReference>
<dbReference type="GO" id="GO:0006122">
    <property type="term" value="P:mitochondrial electron transport, ubiquinol to cytochrome c"/>
    <property type="evidence" value="ECO:0007669"/>
    <property type="project" value="TreeGrafter"/>
</dbReference>
<dbReference type="CDD" id="cd00290">
    <property type="entry name" value="cytochrome_b_C"/>
    <property type="match status" value="1"/>
</dbReference>
<dbReference type="CDD" id="cd00284">
    <property type="entry name" value="Cytochrome_b_N"/>
    <property type="match status" value="1"/>
</dbReference>
<dbReference type="FunFam" id="1.20.810.10:FF:000002">
    <property type="entry name" value="Cytochrome b"/>
    <property type="match status" value="1"/>
</dbReference>
<dbReference type="Gene3D" id="1.20.810.10">
    <property type="entry name" value="Cytochrome Bc1 Complex, Chain C"/>
    <property type="match status" value="1"/>
</dbReference>
<dbReference type="InterPro" id="IPR005798">
    <property type="entry name" value="Cyt_b/b6_C"/>
</dbReference>
<dbReference type="InterPro" id="IPR036150">
    <property type="entry name" value="Cyt_b/b6_C_sf"/>
</dbReference>
<dbReference type="InterPro" id="IPR005797">
    <property type="entry name" value="Cyt_b/b6_N"/>
</dbReference>
<dbReference type="InterPro" id="IPR027387">
    <property type="entry name" value="Cytb/b6-like_sf"/>
</dbReference>
<dbReference type="InterPro" id="IPR030689">
    <property type="entry name" value="Cytochrome_b"/>
</dbReference>
<dbReference type="InterPro" id="IPR048260">
    <property type="entry name" value="Cytochrome_b_C_euk/bac"/>
</dbReference>
<dbReference type="InterPro" id="IPR048259">
    <property type="entry name" value="Cytochrome_b_N_euk/bac"/>
</dbReference>
<dbReference type="InterPro" id="IPR016174">
    <property type="entry name" value="Di-haem_cyt_TM"/>
</dbReference>
<dbReference type="PANTHER" id="PTHR19271">
    <property type="entry name" value="CYTOCHROME B"/>
    <property type="match status" value="1"/>
</dbReference>
<dbReference type="PANTHER" id="PTHR19271:SF16">
    <property type="entry name" value="CYTOCHROME B"/>
    <property type="match status" value="1"/>
</dbReference>
<dbReference type="Pfam" id="PF00032">
    <property type="entry name" value="Cytochrom_B_C"/>
    <property type="match status" value="1"/>
</dbReference>
<dbReference type="Pfam" id="PF00033">
    <property type="entry name" value="Cytochrome_B"/>
    <property type="match status" value="1"/>
</dbReference>
<dbReference type="PIRSF" id="PIRSF038885">
    <property type="entry name" value="COB"/>
    <property type="match status" value="1"/>
</dbReference>
<dbReference type="SUPFAM" id="SSF81648">
    <property type="entry name" value="a domain/subunit of cytochrome bc1 complex (Ubiquinol-cytochrome c reductase)"/>
    <property type="match status" value="1"/>
</dbReference>
<dbReference type="SUPFAM" id="SSF81342">
    <property type="entry name" value="Transmembrane di-heme cytochromes"/>
    <property type="match status" value="1"/>
</dbReference>
<dbReference type="PROSITE" id="PS51003">
    <property type="entry name" value="CYTB_CTER"/>
    <property type="match status" value="1"/>
</dbReference>
<dbReference type="PROSITE" id="PS51002">
    <property type="entry name" value="CYTB_NTER"/>
    <property type="match status" value="1"/>
</dbReference>
<feature type="chain" id="PRO_0000061041" description="Cytochrome b">
    <location>
        <begin position="1"/>
        <end position="379"/>
    </location>
</feature>
<feature type="transmembrane region" description="Helical" evidence="2">
    <location>
        <begin position="33"/>
        <end position="53"/>
    </location>
</feature>
<feature type="transmembrane region" description="Helical" evidence="2">
    <location>
        <begin position="77"/>
        <end position="98"/>
    </location>
</feature>
<feature type="transmembrane region" description="Helical" evidence="2">
    <location>
        <begin position="113"/>
        <end position="133"/>
    </location>
</feature>
<feature type="transmembrane region" description="Helical" evidence="2">
    <location>
        <begin position="178"/>
        <end position="198"/>
    </location>
</feature>
<feature type="transmembrane region" description="Helical" evidence="2">
    <location>
        <begin position="226"/>
        <end position="246"/>
    </location>
</feature>
<feature type="transmembrane region" description="Helical" evidence="2">
    <location>
        <begin position="288"/>
        <end position="308"/>
    </location>
</feature>
<feature type="transmembrane region" description="Helical" evidence="2">
    <location>
        <begin position="320"/>
        <end position="340"/>
    </location>
</feature>
<feature type="transmembrane region" description="Helical" evidence="2">
    <location>
        <begin position="347"/>
        <end position="367"/>
    </location>
</feature>
<feature type="binding site" description="axial binding residue" evidence="2">
    <location>
        <position position="83"/>
    </location>
    <ligand>
        <name>heme b</name>
        <dbReference type="ChEBI" id="CHEBI:60344"/>
        <label>b562</label>
    </ligand>
    <ligandPart>
        <name>Fe</name>
        <dbReference type="ChEBI" id="CHEBI:18248"/>
    </ligandPart>
</feature>
<feature type="binding site" description="axial binding residue" evidence="2">
    <location>
        <position position="97"/>
    </location>
    <ligand>
        <name>heme b</name>
        <dbReference type="ChEBI" id="CHEBI:60344"/>
        <label>b566</label>
    </ligand>
    <ligandPart>
        <name>Fe</name>
        <dbReference type="ChEBI" id="CHEBI:18248"/>
    </ligandPart>
</feature>
<feature type="binding site" description="axial binding residue" evidence="2">
    <location>
        <position position="182"/>
    </location>
    <ligand>
        <name>heme b</name>
        <dbReference type="ChEBI" id="CHEBI:60344"/>
        <label>b562</label>
    </ligand>
    <ligandPart>
        <name>Fe</name>
        <dbReference type="ChEBI" id="CHEBI:18248"/>
    </ligandPart>
</feature>
<feature type="binding site" description="axial binding residue" evidence="2">
    <location>
        <position position="196"/>
    </location>
    <ligand>
        <name>heme b</name>
        <dbReference type="ChEBI" id="CHEBI:60344"/>
        <label>b566</label>
    </ligand>
    <ligandPart>
        <name>Fe</name>
        <dbReference type="ChEBI" id="CHEBI:18248"/>
    </ligandPart>
</feature>
<feature type="binding site" evidence="2">
    <location>
        <position position="201"/>
    </location>
    <ligand>
        <name>a ubiquinone</name>
        <dbReference type="ChEBI" id="CHEBI:16389"/>
    </ligand>
</feature>
<keyword id="KW-0249">Electron transport</keyword>
<keyword id="KW-0349">Heme</keyword>
<keyword id="KW-0408">Iron</keyword>
<keyword id="KW-0472">Membrane</keyword>
<keyword id="KW-0479">Metal-binding</keyword>
<keyword id="KW-0496">Mitochondrion</keyword>
<keyword id="KW-0999">Mitochondrion inner membrane</keyword>
<keyword id="KW-0679">Respiratory chain</keyword>
<keyword id="KW-0812">Transmembrane</keyword>
<keyword id="KW-1133">Transmembrane helix</keyword>
<keyword id="KW-0813">Transport</keyword>
<keyword id="KW-0830">Ubiquinone</keyword>
<accession>Q34717</accession>
<accession>Q34714</accession>
<geneLocation type="mitochondrion"/>
<comment type="function">
    <text evidence="2">Component of the ubiquinol-cytochrome c reductase complex (complex III or cytochrome b-c1 complex) that is part of the mitochondrial respiratory chain. The b-c1 complex mediates electron transfer from ubiquinol to cytochrome c. Contributes to the generation of a proton gradient across the mitochondrial membrane that is then used for ATP synthesis.</text>
</comment>
<comment type="cofactor">
    <cofactor evidence="2">
        <name>heme b</name>
        <dbReference type="ChEBI" id="CHEBI:60344"/>
    </cofactor>
    <text evidence="2">Binds 2 heme b groups non-covalently.</text>
</comment>
<comment type="subunit">
    <text evidence="2">The cytochrome bc1 complex contains 11 subunits: 3 respiratory subunits (MT-CYB, CYC1 and UQCRFS1), 2 core proteins (UQCRC1 and UQCRC2) and 6 low-molecular weight proteins (UQCRH/QCR6, UQCRB/QCR7, UQCRQ/QCR8, UQCR10/QCR9, UQCR11/QCR10 and a cleavage product of UQCRFS1). This cytochrome bc1 complex then forms a dimer.</text>
</comment>
<comment type="subcellular location">
    <subcellularLocation>
        <location evidence="2">Mitochondrion inner membrane</location>
        <topology evidence="2">Multi-pass membrane protein</topology>
    </subcellularLocation>
</comment>
<comment type="miscellaneous">
    <text evidence="1">Heme 1 (or BL or b562) is low-potential and absorbs at about 562 nm, and heme 2 (or BH or b566) is high-potential and absorbs at about 566 nm.</text>
</comment>
<comment type="similarity">
    <text evidence="3 4">Belongs to the cytochrome b family.</text>
</comment>
<comment type="caution">
    <text evidence="2">The full-length protein contains only eight transmembrane helices, not nine as predicted by bioinformatics tools.</text>
</comment>
<name>CYB_HIPEQ</name>
<proteinExistence type="inferred from homology"/>
<reference key="1">
    <citation type="journal article" date="1999" name="Mol. Phylogenet. Evol.">
        <title>Cytochrome b phylogeny of the family bovidae: resolution within the alcelaphini, antilopini, neotragini, and tragelaphini.</title>
        <authorList>
            <person name="Matthee C.A."/>
            <person name="Robinson T.J."/>
        </authorList>
    </citation>
    <scope>NUCLEOTIDE SEQUENCE [GENOMIC DNA]</scope>
</reference>
<sequence length="379" mass="42732">MTNIRKTHPLMKIVNNAFIDLPAPSNISSWWNFGSLLGICLILQILTGLFLAMHYTSDTTTAFSSVTHICRDVNYGWIIRYMHANGASMFFICLFMHVGRGLYYGSYTFLETWNIGVILLFAMMATAFMGYVLPWGQMSFWGATVITNLLSAIPYIGTNLVEWIWGGFSVDKATLTRFFAFHFILPFIITALAMVHLLFLHETGSNNPTGIWSDSDKTPFHPYYTIKDILGALLLILALMLLVLFAPDLLGDPDNYAPANPLNTAPHIKPEWYFLFAYAILRSIPNKLGGVLALILSILILVLMPALHTSKQRSMMFRPISQCIFWILVADLLTLTWIGGQPVEHPYIIIGQLASIMYFLLSLVLMPMASTIENNLLKW</sequence>
<evidence type="ECO:0000250" key="1"/>
<evidence type="ECO:0000250" key="2">
    <source>
        <dbReference type="UniProtKB" id="P00157"/>
    </source>
</evidence>
<evidence type="ECO:0000255" key="3">
    <source>
        <dbReference type="PROSITE-ProRule" id="PRU00967"/>
    </source>
</evidence>
<evidence type="ECO:0000255" key="4">
    <source>
        <dbReference type="PROSITE-ProRule" id="PRU00968"/>
    </source>
</evidence>
<protein>
    <recommendedName>
        <fullName>Cytochrome b</fullName>
    </recommendedName>
    <alternativeName>
        <fullName>Complex III subunit 3</fullName>
    </alternativeName>
    <alternativeName>
        <fullName>Complex III subunit III</fullName>
    </alternativeName>
    <alternativeName>
        <fullName>Cytochrome b-c1 complex subunit 3</fullName>
    </alternativeName>
    <alternativeName>
        <fullName>Ubiquinol-cytochrome-c reductase complex cytochrome b subunit</fullName>
    </alternativeName>
</protein>
<gene>
    <name type="primary">MT-CYB</name>
    <name type="synonym">COB</name>
    <name type="synonym">CYTB</name>
    <name type="synonym">MTCYB</name>
</gene>
<organism>
    <name type="scientific">Hippotragus equinus</name>
    <name type="common">Roan antelope</name>
    <dbReference type="NCBI Taxonomy" id="37186"/>
    <lineage>
        <taxon>Eukaryota</taxon>
        <taxon>Metazoa</taxon>
        <taxon>Chordata</taxon>
        <taxon>Craniata</taxon>
        <taxon>Vertebrata</taxon>
        <taxon>Euteleostomi</taxon>
        <taxon>Mammalia</taxon>
        <taxon>Eutheria</taxon>
        <taxon>Laurasiatheria</taxon>
        <taxon>Artiodactyla</taxon>
        <taxon>Ruminantia</taxon>
        <taxon>Pecora</taxon>
        <taxon>Bovidae</taxon>
        <taxon>Hippotraginae</taxon>
        <taxon>Hippotragus</taxon>
    </lineage>
</organism>